<reference key="1">
    <citation type="journal article" date="1998" name="DNA Res.">
        <title>Structural analysis of Arabidopsis thaliana chromosome 5. VII. Sequence features of the regions of 1,013,767 bp covered by sixteen physically assigned P1 and TAC clones.</title>
        <authorList>
            <person name="Nakamura Y."/>
            <person name="Sato S."/>
            <person name="Asamizu E."/>
            <person name="Kaneko T."/>
            <person name="Kotani H."/>
            <person name="Miyajima N."/>
            <person name="Tabata S."/>
        </authorList>
    </citation>
    <scope>NUCLEOTIDE SEQUENCE [LARGE SCALE GENOMIC DNA]</scope>
    <source>
        <strain>cv. Columbia</strain>
    </source>
</reference>
<reference key="2">
    <citation type="journal article" date="2017" name="Plant J.">
        <title>Araport11: a complete reannotation of the Arabidopsis thaliana reference genome.</title>
        <authorList>
            <person name="Cheng C.Y."/>
            <person name="Krishnakumar V."/>
            <person name="Chan A.P."/>
            <person name="Thibaud-Nissen F."/>
            <person name="Schobel S."/>
            <person name="Town C.D."/>
        </authorList>
    </citation>
    <scope>GENOME REANNOTATION</scope>
    <source>
        <strain>cv. Columbia</strain>
    </source>
</reference>
<reference key="3">
    <citation type="journal article" date="2016" name="J. Biol. Chem.">
        <title>Arabidopsis Rab geranylgeranyltransferases demonstrate redundancy and broad substrate specificity in vitro.</title>
        <authorList>
            <person name="Shi W."/>
            <person name="Zeng Q."/>
            <person name="Kunkel B.N."/>
            <person name="Running M.P."/>
        </authorList>
    </citation>
    <scope>FUNCTION</scope>
</reference>
<organism>
    <name type="scientific">Arabidopsis thaliana</name>
    <name type="common">Mouse-ear cress</name>
    <dbReference type="NCBI Taxonomy" id="3702"/>
    <lineage>
        <taxon>Eukaryota</taxon>
        <taxon>Viridiplantae</taxon>
        <taxon>Streptophyta</taxon>
        <taxon>Embryophyta</taxon>
        <taxon>Tracheophyta</taxon>
        <taxon>Spermatophyta</taxon>
        <taxon>Magnoliopsida</taxon>
        <taxon>eudicotyledons</taxon>
        <taxon>Gunneridae</taxon>
        <taxon>Pentapetalae</taxon>
        <taxon>rosids</taxon>
        <taxon>malvids</taxon>
        <taxon>Brassicales</taxon>
        <taxon>Brassicaceae</taxon>
        <taxon>Camelineae</taxon>
        <taxon>Arabidopsis</taxon>
    </lineage>
</organism>
<dbReference type="EC" id="2.5.1.60" evidence="6"/>
<dbReference type="EMBL" id="AB016871">
    <property type="protein sequence ID" value="BAB10657.1"/>
    <property type="molecule type" value="Genomic_DNA"/>
</dbReference>
<dbReference type="EMBL" id="CP002688">
    <property type="protein sequence ID" value="AED94733.1"/>
    <property type="molecule type" value="Genomic_DNA"/>
</dbReference>
<dbReference type="EMBL" id="CP002688">
    <property type="protein sequence ID" value="ANM70211.1"/>
    <property type="molecule type" value="Genomic_DNA"/>
</dbReference>
<dbReference type="RefSeq" id="NP_001331841.1">
    <property type="nucleotide sequence ID" value="NM_001344422.1"/>
</dbReference>
<dbReference type="RefSeq" id="NP_198997.1">
    <property type="nucleotide sequence ID" value="NM_123547.2"/>
</dbReference>
<dbReference type="SMR" id="Q9FJ32"/>
<dbReference type="FunCoup" id="Q9FJ32">
    <property type="interactions" value="966"/>
</dbReference>
<dbReference type="STRING" id="3702.Q9FJ32"/>
<dbReference type="iPTMnet" id="Q9FJ32"/>
<dbReference type="PaxDb" id="3702-AT5G41820.1"/>
<dbReference type="ProteomicsDB" id="236723"/>
<dbReference type="EnsemblPlants" id="AT5G41820.1">
    <property type="protein sequence ID" value="AT5G41820.1"/>
    <property type="gene ID" value="AT5G41820"/>
</dbReference>
<dbReference type="EnsemblPlants" id="AT5G41820.2">
    <property type="protein sequence ID" value="AT5G41820.2"/>
    <property type="gene ID" value="AT5G41820"/>
</dbReference>
<dbReference type="GeneID" id="834187"/>
<dbReference type="Gramene" id="AT5G41820.1">
    <property type="protein sequence ID" value="AT5G41820.1"/>
    <property type="gene ID" value="AT5G41820"/>
</dbReference>
<dbReference type="Gramene" id="AT5G41820.2">
    <property type="protein sequence ID" value="AT5G41820.2"/>
    <property type="gene ID" value="AT5G41820"/>
</dbReference>
<dbReference type="KEGG" id="ath:AT5G41820"/>
<dbReference type="Araport" id="AT5G41820"/>
<dbReference type="TAIR" id="AT5G41820">
    <property type="gene designation" value="RGTA2"/>
</dbReference>
<dbReference type="eggNOG" id="KOG0529">
    <property type="taxonomic scope" value="Eukaryota"/>
</dbReference>
<dbReference type="HOGENOM" id="CLU_024090_0_0_1"/>
<dbReference type="InParanoid" id="Q9FJ32"/>
<dbReference type="OMA" id="AWHYRSV"/>
<dbReference type="PhylomeDB" id="Q9FJ32"/>
<dbReference type="BRENDA" id="2.5.1.60">
    <property type="organism ID" value="399"/>
</dbReference>
<dbReference type="PRO" id="PR:Q9FJ32"/>
<dbReference type="Proteomes" id="UP000006548">
    <property type="component" value="Chromosome 5"/>
</dbReference>
<dbReference type="ExpressionAtlas" id="Q9FJ32">
    <property type="expression patterns" value="baseline and differential"/>
</dbReference>
<dbReference type="GO" id="GO:0004663">
    <property type="term" value="F:Rab geranylgeranyltransferase activity"/>
    <property type="evidence" value="ECO:0007669"/>
    <property type="project" value="UniProtKB-EC"/>
</dbReference>
<dbReference type="FunFam" id="3.80.10.10:FF:002535">
    <property type="entry name" value="Geranylgeranyl transferase type-2 subunit alpha 1"/>
    <property type="match status" value="1"/>
</dbReference>
<dbReference type="Gene3D" id="1.25.40.120">
    <property type="entry name" value="Protein prenylyltransferase"/>
    <property type="match status" value="1"/>
</dbReference>
<dbReference type="Gene3D" id="3.80.10.10">
    <property type="entry name" value="Ribonuclease Inhibitor"/>
    <property type="match status" value="1"/>
</dbReference>
<dbReference type="InterPro" id="IPR001611">
    <property type="entry name" value="Leu-rich_rpt"/>
</dbReference>
<dbReference type="InterPro" id="IPR032675">
    <property type="entry name" value="LRR_dom_sf"/>
</dbReference>
<dbReference type="InterPro" id="IPR002088">
    <property type="entry name" value="Prenyl_trans_a"/>
</dbReference>
<dbReference type="PANTHER" id="PTHR11129:SF2">
    <property type="entry name" value="GERANYLGERANYL TRANSFERASE TYPE-2 SUBUNIT ALPHA"/>
    <property type="match status" value="1"/>
</dbReference>
<dbReference type="PANTHER" id="PTHR11129">
    <property type="entry name" value="PROTEIN FARNESYLTRANSFERASE ALPHA SUBUNIT/RAB GERANYLGERANYL TRANSFERASE ALPHA SUBUNIT"/>
    <property type="match status" value="1"/>
</dbReference>
<dbReference type="Pfam" id="PF00560">
    <property type="entry name" value="LRR_1"/>
    <property type="match status" value="1"/>
</dbReference>
<dbReference type="Pfam" id="PF01239">
    <property type="entry name" value="PPTA"/>
    <property type="match status" value="3"/>
</dbReference>
<dbReference type="SUPFAM" id="SSF52058">
    <property type="entry name" value="L domain-like"/>
    <property type="match status" value="1"/>
</dbReference>
<dbReference type="SUPFAM" id="SSF48439">
    <property type="entry name" value="Protein prenylyltransferase"/>
    <property type="match status" value="1"/>
</dbReference>
<dbReference type="PROSITE" id="PS51450">
    <property type="entry name" value="LRR"/>
    <property type="match status" value="3"/>
</dbReference>
<dbReference type="PROSITE" id="PS51147">
    <property type="entry name" value="PFTA"/>
    <property type="match status" value="5"/>
</dbReference>
<feature type="chain" id="PRO_0000436610" description="Geranylgeranyl transferase type-2 subunit alpha 2">
    <location>
        <begin position="1"/>
        <end position="687"/>
    </location>
</feature>
<feature type="repeat" description="PFTA 1" evidence="3">
    <location>
        <begin position="38"/>
        <end position="72"/>
    </location>
</feature>
<feature type="repeat" description="PFTA 2" evidence="3">
    <location>
        <begin position="83"/>
        <end position="117"/>
    </location>
</feature>
<feature type="repeat" description="PFTA 3" evidence="3">
    <location>
        <begin position="132"/>
        <end position="167"/>
    </location>
</feature>
<feature type="repeat" description="PFTA 4" evidence="3">
    <location>
        <begin position="168"/>
        <end position="203"/>
    </location>
</feature>
<feature type="repeat" description="PFTA 5" evidence="3">
    <location>
        <begin position="214"/>
        <end position="248"/>
    </location>
</feature>
<feature type="repeat" description="LRR 1" evidence="2">
    <location>
        <begin position="523"/>
        <end position="545"/>
    </location>
</feature>
<feature type="repeat" description="LRR 2" evidence="2">
    <location>
        <begin position="546"/>
        <end position="567"/>
    </location>
</feature>
<feature type="repeat" description="LRR 3" evidence="2">
    <location>
        <begin position="568"/>
        <end position="591"/>
    </location>
</feature>
<feature type="repeat" description="LRR 4" evidence="2">
    <location>
        <begin position="592"/>
        <end position="616"/>
    </location>
</feature>
<feature type="repeat" description="LRR 5" evidence="2">
    <location>
        <begin position="646"/>
        <end position="668"/>
    </location>
</feature>
<evidence type="ECO:0000250" key="1">
    <source>
        <dbReference type="UniProtKB" id="Q8VYB7"/>
    </source>
</evidence>
<evidence type="ECO:0000255" key="2"/>
<evidence type="ECO:0000255" key="3">
    <source>
        <dbReference type="PROSITE-ProRule" id="PRU00488"/>
    </source>
</evidence>
<evidence type="ECO:0000269" key="4">
    <source>
    </source>
</evidence>
<evidence type="ECO:0000303" key="5">
    <source>
    </source>
</evidence>
<evidence type="ECO:0000305" key="6"/>
<evidence type="ECO:0000312" key="7">
    <source>
        <dbReference type="Araport" id="AT5G41820"/>
    </source>
</evidence>
<evidence type="ECO:0000312" key="8">
    <source>
        <dbReference type="EMBL" id="BAB10657.1"/>
    </source>
</evidence>
<gene>
    <name evidence="5" type="primary">RGTA2</name>
    <name evidence="7" type="ordered locus">At5g41820</name>
    <name evidence="8" type="ORF">K16L22.10</name>
</gene>
<keyword id="KW-0433">Leucine-rich repeat</keyword>
<keyword id="KW-0637">Prenyltransferase</keyword>
<keyword id="KW-1185">Reference proteome</keyword>
<keyword id="KW-0677">Repeat</keyword>
<keyword id="KW-0808">Transferase</keyword>
<protein>
    <recommendedName>
        <fullName evidence="6">Geranylgeranyl transferase type-2 subunit alpha 2</fullName>
        <ecNumber evidence="6">2.5.1.60</ecNumber>
    </recommendedName>
    <alternativeName>
        <fullName evidence="6">Geranylgeranyl transferase type II subunit alpha 2</fullName>
    </alternativeName>
    <alternativeName>
        <fullName evidence="5">Rab geranylgeranyl transferase alpha subunit 2</fullName>
        <shortName evidence="5">AtRGTA2</shortName>
        <shortName evidence="6">Rab-GGT alpha 2</shortName>
    </alternativeName>
</protein>
<accession>Q9FJ32</accession>
<proteinExistence type="inferred from homology"/>
<name>PGTA2_ARATH</name>
<comment type="function">
    <text evidence="1 4">Catalyzes the transfer of a geranylgeranyl moiety from geranylgeranyl diphosphate to both cysteines of Rab proteins with the C-terminal sequence -CCXX, CXXX, -XCCX and -XCXC, such as RABA1A, RABA2A, RABF2A and RABG2 (By similarity). Does not seem to be a functional Rab-GGT alpha subunit in vitro (PubMed:26589801).</text>
</comment>
<comment type="catalytic activity">
    <reaction evidence="1">
        <text>geranylgeranyl diphosphate + L-cysteinyl-[protein] = S-geranylgeranyl-L-cysteinyl-[protein] + diphosphate</text>
        <dbReference type="Rhea" id="RHEA:21240"/>
        <dbReference type="Rhea" id="RHEA-COMP:10131"/>
        <dbReference type="Rhea" id="RHEA-COMP:11537"/>
        <dbReference type="ChEBI" id="CHEBI:29950"/>
        <dbReference type="ChEBI" id="CHEBI:33019"/>
        <dbReference type="ChEBI" id="CHEBI:57533"/>
        <dbReference type="ChEBI" id="CHEBI:86021"/>
        <dbReference type="EC" id="2.5.1.60"/>
    </reaction>
</comment>
<comment type="activity regulation">
    <text evidence="1">The enzymatic reaction requires the aid of the Rab escort protein REP.</text>
</comment>
<comment type="subunit">
    <text evidence="1">Heterotrimer composed of the alpha subunit RGTA, the beta subunit RGTB and REP; within this trimer, RGTA and RGTB form the catalytic component, while REP mediates peptide substrate binding.</text>
</comment>
<comment type="similarity">
    <text evidence="6">Belongs to the protein prenyltransferase subunit alpha family.</text>
</comment>
<sequence length="687" mass="79141">MHGRKREEDPNPEETAAKALELRSLQSQFMSNHHQKIYTKEAIQLSAKLLITNPEFYTAWNYPKLAFESRLDEDSDPSLVNSIIDEELGVVQNALERNVKSYGAWYHRKWVLSKKGHYYPSLENELQLLNDYQKQAHQKQDDEKQDDPSRNFHAWNYRRFVVELTKTSEEDELQYTTDMISDISFTIYSAWHYRSVLVSSLVAKKADGFMPKETIRRELDYVHSAIFTLEEKQSGWFYYLWLLDQTVKMEIPLRFSSWPSDGSIIILSGPDCFNASSSTTKLTTFCSESGSFPLILYFDQAVSGVSSSTVTIGSELKDLVWEPVSDKKNSQVDSCVWVARLKFDCREPCFSRKETKVKVSLGGIVSSMGCNLTAPYEFVFTLRIHDTVEVELSQQESIVSWTDGFDNWDDNALSNDLNSLTALNADTGFEWRKKAIKIEIELFRTLPDSKIGKLILARLLMAEETMISNGVHYKEILQLYNDLMALDSWHNQYYKDEHSVALIHKVTSRTESMSRHLFRYRNMNNIICLRLNNLTLSRIAAVEKLLFVQMLDLSHNELHSAEGLEAMQLLCCLNLSHNRIRSFSALDSLRHLKQLRVLDVSHNHICGELPVDTTRYLCSSPLSNSGETGREVPNKYQDAYLVLRDLMKLKQLDIRGNDLIFAGEEFSSFVRQVVPKLVWLDGHKLTS</sequence>